<proteinExistence type="inferred from homology"/>
<sequence length="108" mass="11666">MGVQVVPIAPGDGSTYPKNGQKVTVHYTGTLDDGTKFDSSRDRNKPFKFTIGKGEVIRGWDEGVAQLSVGQRAKLICSPDYAYGSRGHPGVIPPNSTLTFDVELLKVE</sequence>
<comment type="function">
    <text evidence="3">PPIases accelerate the folding of proteins. It catalyzes the cis-trans isomerization of proline imidic peptide bonds in oligopeptides. Binds to ligand-free TGF beta type I receptor, from which it is released upon a ligand-induced, type II receptor mediated phosphorylation of the type I receptor. Binding is inhibitory to the signaling pathways of the TGF beta family ligands.</text>
</comment>
<comment type="catalytic activity">
    <reaction>
        <text>[protein]-peptidylproline (omega=180) = [protein]-peptidylproline (omega=0)</text>
        <dbReference type="Rhea" id="RHEA:16237"/>
        <dbReference type="Rhea" id="RHEA-COMP:10747"/>
        <dbReference type="Rhea" id="RHEA-COMP:10748"/>
        <dbReference type="ChEBI" id="CHEBI:83833"/>
        <dbReference type="ChEBI" id="CHEBI:83834"/>
        <dbReference type="EC" id="5.2.1.8"/>
    </reaction>
</comment>
<comment type="subcellular location">
    <subcellularLocation>
        <location evidence="3">Cytoplasm</location>
    </subcellularLocation>
</comment>
<comment type="similarity">
    <text evidence="5">Belongs to the FKBP-type PPIase family. FKBP1 subfamily.</text>
</comment>
<comment type="sequence caution" evidence="5">
    <conflict type="frameshift">
        <sequence resource="EMBL-CDS" id="AAL48728"/>
    </conflict>
</comment>
<keyword id="KW-0963">Cytoplasm</keyword>
<keyword id="KW-0413">Isomerase</keyword>
<keyword id="KW-1185">Reference proteome</keyword>
<keyword id="KW-0697">Rotamase</keyword>
<dbReference type="EC" id="5.2.1.8"/>
<dbReference type="EMBL" id="Z49079">
    <property type="protein sequence ID" value="CAA88904.1"/>
    <property type="molecule type" value="mRNA"/>
</dbReference>
<dbReference type="EMBL" id="U41441">
    <property type="protein sequence ID" value="AAA91178.1"/>
    <property type="molecule type" value="Genomic_DNA"/>
</dbReference>
<dbReference type="EMBL" id="AE013599">
    <property type="protein sequence ID" value="AAF57582.1"/>
    <property type="molecule type" value="Genomic_DNA"/>
</dbReference>
<dbReference type="EMBL" id="AY071106">
    <property type="protein sequence ID" value="AAL48728.1"/>
    <property type="status" value="ALT_FRAME"/>
    <property type="molecule type" value="mRNA"/>
</dbReference>
<dbReference type="PIR" id="S54139">
    <property type="entry name" value="S54139"/>
</dbReference>
<dbReference type="RefSeq" id="NP_523792.2">
    <property type="nucleotide sequence ID" value="NM_079068.5"/>
</dbReference>
<dbReference type="SMR" id="P48375"/>
<dbReference type="BioGRID" id="62878">
    <property type="interactions" value="73"/>
</dbReference>
<dbReference type="FunCoup" id="P48375">
    <property type="interactions" value="1151"/>
</dbReference>
<dbReference type="IntAct" id="P48375">
    <property type="interactions" value="25"/>
</dbReference>
<dbReference type="STRING" id="7227.FBpp0085703"/>
<dbReference type="PaxDb" id="7227-FBpp0085703"/>
<dbReference type="DNASU" id="37214"/>
<dbReference type="EnsemblMetazoa" id="FBtr0086515">
    <property type="protein sequence ID" value="FBpp0085703"/>
    <property type="gene ID" value="FBgn0013954"/>
</dbReference>
<dbReference type="GeneID" id="37214"/>
<dbReference type="KEGG" id="dme:Dmel_CG11001"/>
<dbReference type="AGR" id="FB:FBgn0013954"/>
<dbReference type="CTD" id="37214"/>
<dbReference type="FlyBase" id="FBgn0013954">
    <property type="gene designation" value="Fkbp12"/>
</dbReference>
<dbReference type="VEuPathDB" id="VectorBase:FBgn0013954"/>
<dbReference type="eggNOG" id="KOG0544">
    <property type="taxonomic scope" value="Eukaryota"/>
</dbReference>
<dbReference type="GeneTree" id="ENSGT00940000153311"/>
<dbReference type="HOGENOM" id="CLU_013615_12_1_1"/>
<dbReference type="InParanoid" id="P48375"/>
<dbReference type="OMA" id="FTQATMG"/>
<dbReference type="OrthoDB" id="1902587at2759"/>
<dbReference type="PhylomeDB" id="P48375"/>
<dbReference type="Reactome" id="R-DME-166208">
    <property type="pathway name" value="mTORC1-mediated signalling"/>
</dbReference>
<dbReference type="Reactome" id="R-DME-2025928">
    <property type="pathway name" value="Calcineurin activates NFAT"/>
</dbReference>
<dbReference type="Reactome" id="R-DME-2173789">
    <property type="pathway name" value="TGF-beta receptor signaling activates SMADs"/>
</dbReference>
<dbReference type="SignaLink" id="P48375"/>
<dbReference type="BioGRID-ORCS" id="37214">
    <property type="hits" value="1 hit in 3 CRISPR screens"/>
</dbReference>
<dbReference type="ChiTaRS" id="FK506-bp2">
    <property type="organism name" value="fly"/>
</dbReference>
<dbReference type="GenomeRNAi" id="37214"/>
<dbReference type="PRO" id="PR:P48375"/>
<dbReference type="Proteomes" id="UP000000803">
    <property type="component" value="Chromosome 2R"/>
</dbReference>
<dbReference type="Bgee" id="FBgn0013954">
    <property type="expression patterns" value="Expressed in spermatocyte in testis and 278 other cell types or tissues"/>
</dbReference>
<dbReference type="ExpressionAtlas" id="P48375">
    <property type="expression patterns" value="baseline and differential"/>
</dbReference>
<dbReference type="GO" id="GO:0005737">
    <property type="term" value="C:cytoplasm"/>
    <property type="evidence" value="ECO:0000318"/>
    <property type="project" value="GO_Central"/>
</dbReference>
<dbReference type="GO" id="GO:0005829">
    <property type="term" value="C:cytosol"/>
    <property type="evidence" value="ECO:0000250"/>
    <property type="project" value="FlyBase"/>
</dbReference>
<dbReference type="GO" id="GO:0005886">
    <property type="term" value="C:plasma membrane"/>
    <property type="evidence" value="ECO:0007005"/>
    <property type="project" value="FlyBase"/>
</dbReference>
<dbReference type="GO" id="GO:0033017">
    <property type="term" value="C:sarcoplasmic reticulum membrane"/>
    <property type="evidence" value="ECO:0000318"/>
    <property type="project" value="GO_Central"/>
</dbReference>
<dbReference type="GO" id="GO:0003755">
    <property type="term" value="F:peptidyl-prolyl cis-trans isomerase activity"/>
    <property type="evidence" value="ECO:0000250"/>
    <property type="project" value="FlyBase"/>
</dbReference>
<dbReference type="GO" id="GO:0034713">
    <property type="term" value="F:type I transforming growth factor beta receptor binding"/>
    <property type="evidence" value="ECO:0000353"/>
    <property type="project" value="FlyBase"/>
</dbReference>
<dbReference type="FunFam" id="3.10.50.40:FF:000008">
    <property type="entry name" value="Peptidylprolyl isomerase"/>
    <property type="match status" value="1"/>
</dbReference>
<dbReference type="Gene3D" id="3.10.50.40">
    <property type="match status" value="1"/>
</dbReference>
<dbReference type="InterPro" id="IPR050689">
    <property type="entry name" value="FKBP-type_PPIase"/>
</dbReference>
<dbReference type="InterPro" id="IPR046357">
    <property type="entry name" value="PPIase_dom_sf"/>
</dbReference>
<dbReference type="InterPro" id="IPR001179">
    <property type="entry name" value="PPIase_FKBP_dom"/>
</dbReference>
<dbReference type="PANTHER" id="PTHR10516:SF443">
    <property type="entry name" value="FK506-BINDING PROTEIN 59-RELATED"/>
    <property type="match status" value="1"/>
</dbReference>
<dbReference type="PANTHER" id="PTHR10516">
    <property type="entry name" value="PEPTIDYL-PROLYL CIS-TRANS ISOMERASE"/>
    <property type="match status" value="1"/>
</dbReference>
<dbReference type="Pfam" id="PF00254">
    <property type="entry name" value="FKBP_C"/>
    <property type="match status" value="1"/>
</dbReference>
<dbReference type="SUPFAM" id="SSF54534">
    <property type="entry name" value="FKBP-like"/>
    <property type="match status" value="1"/>
</dbReference>
<dbReference type="PROSITE" id="PS50059">
    <property type="entry name" value="FKBP_PPIASE"/>
    <property type="match status" value="1"/>
</dbReference>
<protein>
    <recommendedName>
        <fullName evidence="4 6">Peptidyl-prolyl cis-trans isomerase Fkbp12</fullName>
        <shortName evidence="4">PPIase Fkbp12</shortName>
        <ecNumber>5.2.1.8</ecNumber>
    </recommendedName>
    <alternativeName>
        <fullName evidence="5">12 kDa FK506-binding protein</fullName>
        <shortName evidence="5">12 kDa FKBP</shortName>
    </alternativeName>
    <alternativeName>
        <fullName>Macrolide-binding protein</fullName>
    </alternativeName>
    <alternativeName>
        <fullName>Peptidyl-prolyl cis-trans isomerase</fullName>
        <shortName>PPIase</shortName>
    </alternativeName>
    <alternativeName>
        <fullName>Rotamase</fullName>
    </alternativeName>
</protein>
<organism>
    <name type="scientific">Drosophila melanogaster</name>
    <name type="common">Fruit fly</name>
    <dbReference type="NCBI Taxonomy" id="7227"/>
    <lineage>
        <taxon>Eukaryota</taxon>
        <taxon>Metazoa</taxon>
        <taxon>Ecdysozoa</taxon>
        <taxon>Arthropoda</taxon>
        <taxon>Hexapoda</taxon>
        <taxon>Insecta</taxon>
        <taxon>Pterygota</taxon>
        <taxon>Neoptera</taxon>
        <taxon>Endopterygota</taxon>
        <taxon>Diptera</taxon>
        <taxon>Brachycera</taxon>
        <taxon>Muscomorpha</taxon>
        <taxon>Ephydroidea</taxon>
        <taxon>Drosophilidae</taxon>
        <taxon>Drosophila</taxon>
        <taxon>Sophophora</taxon>
    </lineage>
</organism>
<gene>
    <name evidence="4 6" type="primary">Fkbp12</name>
    <name evidence="6" type="synonym">FK506-bp2</name>
    <name evidence="6" type="ORF">CG11001</name>
</gene>
<reference key="1">
    <citation type="submission" date="1995-04" db="EMBL/GenBank/DDBJ databases">
        <title>Drosophila homologue of FKBP-12.</title>
        <authorList>
            <person name="Mounsey A."/>
        </authorList>
    </citation>
    <scope>NUCLEOTIDE SEQUENCE [MRNA]</scope>
    <source>
        <strain>Canton-S</strain>
        <tissue>Head</tissue>
    </source>
</reference>
<reference key="2">
    <citation type="journal article" date="1996" name="Cell">
        <title>The immunophilin FKBP12 functions as a common inhibitor of the TGF beta family type I receptors.</title>
        <authorList>
            <person name="Wang T."/>
            <person name="Li B.Y."/>
            <person name="Danielson P.D."/>
            <person name="Shah P.C."/>
            <person name="Rockwell S."/>
            <person name="Lechleider R.J."/>
            <person name="Martin J."/>
            <person name="Manganaro T."/>
            <person name="Donahoe P.K."/>
        </authorList>
    </citation>
    <scope>NUCLEOTIDE SEQUENCE [GENOMIC DNA]</scope>
    <scope>FUNCTION</scope>
    <scope>SUBCELLULAR LOCATION</scope>
</reference>
<reference key="3">
    <citation type="journal article" date="2000" name="Science">
        <title>The genome sequence of Drosophila melanogaster.</title>
        <authorList>
            <person name="Adams M.D."/>
            <person name="Celniker S.E."/>
            <person name="Holt R.A."/>
            <person name="Evans C.A."/>
            <person name="Gocayne J.D."/>
            <person name="Amanatides P.G."/>
            <person name="Scherer S.E."/>
            <person name="Li P.W."/>
            <person name="Hoskins R.A."/>
            <person name="Galle R.F."/>
            <person name="George R.A."/>
            <person name="Lewis S.E."/>
            <person name="Richards S."/>
            <person name="Ashburner M."/>
            <person name="Henderson S.N."/>
            <person name="Sutton G.G."/>
            <person name="Wortman J.R."/>
            <person name="Yandell M.D."/>
            <person name="Zhang Q."/>
            <person name="Chen L.X."/>
            <person name="Brandon R.C."/>
            <person name="Rogers Y.-H.C."/>
            <person name="Blazej R.G."/>
            <person name="Champe M."/>
            <person name="Pfeiffer B.D."/>
            <person name="Wan K.H."/>
            <person name="Doyle C."/>
            <person name="Baxter E.G."/>
            <person name="Helt G."/>
            <person name="Nelson C.R."/>
            <person name="Miklos G.L.G."/>
            <person name="Abril J.F."/>
            <person name="Agbayani A."/>
            <person name="An H.-J."/>
            <person name="Andrews-Pfannkoch C."/>
            <person name="Baldwin D."/>
            <person name="Ballew R.M."/>
            <person name="Basu A."/>
            <person name="Baxendale J."/>
            <person name="Bayraktaroglu L."/>
            <person name="Beasley E.M."/>
            <person name="Beeson K.Y."/>
            <person name="Benos P.V."/>
            <person name="Berman B.P."/>
            <person name="Bhandari D."/>
            <person name="Bolshakov S."/>
            <person name="Borkova D."/>
            <person name="Botchan M.R."/>
            <person name="Bouck J."/>
            <person name="Brokstein P."/>
            <person name="Brottier P."/>
            <person name="Burtis K.C."/>
            <person name="Busam D.A."/>
            <person name="Butler H."/>
            <person name="Cadieu E."/>
            <person name="Center A."/>
            <person name="Chandra I."/>
            <person name="Cherry J.M."/>
            <person name="Cawley S."/>
            <person name="Dahlke C."/>
            <person name="Davenport L.B."/>
            <person name="Davies P."/>
            <person name="de Pablos B."/>
            <person name="Delcher A."/>
            <person name="Deng Z."/>
            <person name="Mays A.D."/>
            <person name="Dew I."/>
            <person name="Dietz S.M."/>
            <person name="Dodson K."/>
            <person name="Doup L.E."/>
            <person name="Downes M."/>
            <person name="Dugan-Rocha S."/>
            <person name="Dunkov B.C."/>
            <person name="Dunn P."/>
            <person name="Durbin K.J."/>
            <person name="Evangelista C.C."/>
            <person name="Ferraz C."/>
            <person name="Ferriera S."/>
            <person name="Fleischmann W."/>
            <person name="Fosler C."/>
            <person name="Gabrielian A.E."/>
            <person name="Garg N.S."/>
            <person name="Gelbart W.M."/>
            <person name="Glasser K."/>
            <person name="Glodek A."/>
            <person name="Gong F."/>
            <person name="Gorrell J.H."/>
            <person name="Gu Z."/>
            <person name="Guan P."/>
            <person name="Harris M."/>
            <person name="Harris N.L."/>
            <person name="Harvey D.A."/>
            <person name="Heiman T.J."/>
            <person name="Hernandez J.R."/>
            <person name="Houck J."/>
            <person name="Hostin D."/>
            <person name="Houston K.A."/>
            <person name="Howland T.J."/>
            <person name="Wei M.-H."/>
            <person name="Ibegwam C."/>
            <person name="Jalali M."/>
            <person name="Kalush F."/>
            <person name="Karpen G.H."/>
            <person name="Ke Z."/>
            <person name="Kennison J.A."/>
            <person name="Ketchum K.A."/>
            <person name="Kimmel B.E."/>
            <person name="Kodira C.D."/>
            <person name="Kraft C.L."/>
            <person name="Kravitz S."/>
            <person name="Kulp D."/>
            <person name="Lai Z."/>
            <person name="Lasko P."/>
            <person name="Lei Y."/>
            <person name="Levitsky A.A."/>
            <person name="Li J.H."/>
            <person name="Li Z."/>
            <person name="Liang Y."/>
            <person name="Lin X."/>
            <person name="Liu X."/>
            <person name="Mattei B."/>
            <person name="McIntosh T.C."/>
            <person name="McLeod M.P."/>
            <person name="McPherson D."/>
            <person name="Merkulov G."/>
            <person name="Milshina N.V."/>
            <person name="Mobarry C."/>
            <person name="Morris J."/>
            <person name="Moshrefi A."/>
            <person name="Mount S.M."/>
            <person name="Moy M."/>
            <person name="Murphy B."/>
            <person name="Murphy L."/>
            <person name="Muzny D.M."/>
            <person name="Nelson D.L."/>
            <person name="Nelson D.R."/>
            <person name="Nelson K.A."/>
            <person name="Nixon K."/>
            <person name="Nusskern D.R."/>
            <person name="Pacleb J.M."/>
            <person name="Palazzolo M."/>
            <person name="Pittman G.S."/>
            <person name="Pan S."/>
            <person name="Pollard J."/>
            <person name="Puri V."/>
            <person name="Reese M.G."/>
            <person name="Reinert K."/>
            <person name="Remington K."/>
            <person name="Saunders R.D.C."/>
            <person name="Scheeler F."/>
            <person name="Shen H."/>
            <person name="Shue B.C."/>
            <person name="Siden-Kiamos I."/>
            <person name="Simpson M."/>
            <person name="Skupski M.P."/>
            <person name="Smith T.J."/>
            <person name="Spier E."/>
            <person name="Spradling A.C."/>
            <person name="Stapleton M."/>
            <person name="Strong R."/>
            <person name="Sun E."/>
            <person name="Svirskas R."/>
            <person name="Tector C."/>
            <person name="Turner R."/>
            <person name="Venter E."/>
            <person name="Wang A.H."/>
            <person name="Wang X."/>
            <person name="Wang Z.-Y."/>
            <person name="Wassarman D.A."/>
            <person name="Weinstock G.M."/>
            <person name="Weissenbach J."/>
            <person name="Williams S.M."/>
            <person name="Woodage T."/>
            <person name="Worley K.C."/>
            <person name="Wu D."/>
            <person name="Yang S."/>
            <person name="Yao Q.A."/>
            <person name="Ye J."/>
            <person name="Yeh R.-F."/>
            <person name="Zaveri J.S."/>
            <person name="Zhan M."/>
            <person name="Zhang G."/>
            <person name="Zhao Q."/>
            <person name="Zheng L."/>
            <person name="Zheng X.H."/>
            <person name="Zhong F.N."/>
            <person name="Zhong W."/>
            <person name="Zhou X."/>
            <person name="Zhu S.C."/>
            <person name="Zhu X."/>
            <person name="Smith H.O."/>
            <person name="Gibbs R.A."/>
            <person name="Myers E.W."/>
            <person name="Rubin G.M."/>
            <person name="Venter J.C."/>
        </authorList>
    </citation>
    <scope>NUCLEOTIDE SEQUENCE [LARGE SCALE GENOMIC DNA]</scope>
    <source>
        <strain>Berkeley</strain>
    </source>
</reference>
<reference key="4">
    <citation type="journal article" date="2002" name="Genome Biol.">
        <title>Annotation of the Drosophila melanogaster euchromatic genome: a systematic review.</title>
        <authorList>
            <person name="Misra S."/>
            <person name="Crosby M.A."/>
            <person name="Mungall C.J."/>
            <person name="Matthews B.B."/>
            <person name="Campbell K.S."/>
            <person name="Hradecky P."/>
            <person name="Huang Y."/>
            <person name="Kaminker J.S."/>
            <person name="Millburn G.H."/>
            <person name="Prochnik S.E."/>
            <person name="Smith C.D."/>
            <person name="Tupy J.L."/>
            <person name="Whitfield E.J."/>
            <person name="Bayraktaroglu L."/>
            <person name="Berman B.P."/>
            <person name="Bettencourt B.R."/>
            <person name="Celniker S.E."/>
            <person name="de Grey A.D.N.J."/>
            <person name="Drysdale R.A."/>
            <person name="Harris N.L."/>
            <person name="Richter J."/>
            <person name="Russo S."/>
            <person name="Schroeder A.J."/>
            <person name="Shu S.Q."/>
            <person name="Stapleton M."/>
            <person name="Yamada C."/>
            <person name="Ashburner M."/>
            <person name="Gelbart W.M."/>
            <person name="Rubin G.M."/>
            <person name="Lewis S.E."/>
        </authorList>
    </citation>
    <scope>GENOME REANNOTATION</scope>
    <source>
        <strain>Berkeley</strain>
    </source>
</reference>
<reference key="5">
    <citation type="journal article" date="2002" name="Genome Biol.">
        <title>A Drosophila full-length cDNA resource.</title>
        <authorList>
            <person name="Stapleton M."/>
            <person name="Carlson J.W."/>
            <person name="Brokstein P."/>
            <person name="Yu C."/>
            <person name="Champe M."/>
            <person name="George R.A."/>
            <person name="Guarin H."/>
            <person name="Kronmiller B."/>
            <person name="Pacleb J.M."/>
            <person name="Park S."/>
            <person name="Wan K.H."/>
            <person name="Rubin G.M."/>
            <person name="Celniker S.E."/>
        </authorList>
    </citation>
    <scope>NUCLEOTIDE SEQUENCE [LARGE SCALE MRNA]</scope>
    <source>
        <strain>Berkeley</strain>
        <tissue>Embryo</tissue>
    </source>
</reference>
<accession>P48375</accession>
<accession>Q8SZ56</accession>
<accession>Q9V8S8</accession>
<name>FKB12_DROME</name>
<feature type="chain" id="PRO_0000075299" description="Peptidyl-prolyl cis-trans isomerase Fkbp12">
    <location>
        <begin position="1"/>
        <end position="108"/>
    </location>
</feature>
<feature type="domain" description="PPIase FKBP-type" evidence="1">
    <location>
        <begin position="20"/>
        <end position="108"/>
    </location>
</feature>
<feature type="region of interest" description="Disordered" evidence="2">
    <location>
        <begin position="1"/>
        <end position="21"/>
    </location>
</feature>
<feature type="sequence conflict" description="In Ref. 1 and 3." evidence="5" ref="1 3">
    <original>R</original>
    <variation>S</variation>
    <location>
        <position position="72"/>
    </location>
</feature>
<evidence type="ECO:0000255" key="1">
    <source>
        <dbReference type="PROSITE-ProRule" id="PRU00277"/>
    </source>
</evidence>
<evidence type="ECO:0000256" key="2">
    <source>
        <dbReference type="SAM" id="MobiDB-lite"/>
    </source>
</evidence>
<evidence type="ECO:0000269" key="3">
    <source>
    </source>
</evidence>
<evidence type="ECO:0000303" key="4">
    <source>
    </source>
</evidence>
<evidence type="ECO:0000305" key="5"/>
<evidence type="ECO:0000312" key="6">
    <source>
        <dbReference type="FlyBase" id="FBgn0013954"/>
    </source>
</evidence>